<accession>Q87SA6</accession>
<name>MUTH_VIBPA</name>
<dbReference type="EMBL" id="BA000031">
    <property type="protein sequence ID" value="BAC58781.1"/>
    <property type="molecule type" value="Genomic_DNA"/>
</dbReference>
<dbReference type="RefSeq" id="NP_796897.1">
    <property type="nucleotide sequence ID" value="NC_004603.1"/>
</dbReference>
<dbReference type="RefSeq" id="WP_005481789.1">
    <property type="nucleotide sequence ID" value="NC_004603.1"/>
</dbReference>
<dbReference type="SMR" id="Q87SA6"/>
<dbReference type="GeneID" id="1187986"/>
<dbReference type="KEGG" id="vpa:VP0518"/>
<dbReference type="PATRIC" id="fig|223926.6.peg.494"/>
<dbReference type="eggNOG" id="COG3066">
    <property type="taxonomic scope" value="Bacteria"/>
</dbReference>
<dbReference type="HOGENOM" id="CLU_086669_0_0_6"/>
<dbReference type="Proteomes" id="UP000002493">
    <property type="component" value="Chromosome 1"/>
</dbReference>
<dbReference type="GO" id="GO:0005737">
    <property type="term" value="C:cytoplasm"/>
    <property type="evidence" value="ECO:0007669"/>
    <property type="project" value="UniProtKB-SubCell"/>
</dbReference>
<dbReference type="GO" id="GO:0003677">
    <property type="term" value="F:DNA binding"/>
    <property type="evidence" value="ECO:0007669"/>
    <property type="project" value="InterPro"/>
</dbReference>
<dbReference type="GO" id="GO:0004519">
    <property type="term" value="F:endonuclease activity"/>
    <property type="evidence" value="ECO:0007669"/>
    <property type="project" value="UniProtKB-UniRule"/>
</dbReference>
<dbReference type="GO" id="GO:0006304">
    <property type="term" value="P:DNA modification"/>
    <property type="evidence" value="ECO:0007669"/>
    <property type="project" value="InterPro"/>
</dbReference>
<dbReference type="GO" id="GO:0006298">
    <property type="term" value="P:mismatch repair"/>
    <property type="evidence" value="ECO:0007669"/>
    <property type="project" value="UniProtKB-UniRule"/>
</dbReference>
<dbReference type="CDD" id="cd00583">
    <property type="entry name" value="MutH-like"/>
    <property type="match status" value="1"/>
</dbReference>
<dbReference type="Gene3D" id="3.40.600.10">
    <property type="entry name" value="DNA mismatch repair MutH/Restriction endonuclease, type II"/>
    <property type="match status" value="1"/>
</dbReference>
<dbReference type="HAMAP" id="MF_00759">
    <property type="entry name" value="MutH"/>
    <property type="match status" value="1"/>
</dbReference>
<dbReference type="InterPro" id="IPR004230">
    <property type="entry name" value="DNA_mismatch_repair_MutH"/>
</dbReference>
<dbReference type="InterPro" id="IPR011337">
    <property type="entry name" value="DNA_rep_MutH/RE_typeII_Sau3AI"/>
</dbReference>
<dbReference type="InterPro" id="IPR037057">
    <property type="entry name" value="DNA_rep_MutH/T2_RE_sf"/>
</dbReference>
<dbReference type="InterPro" id="IPR011335">
    <property type="entry name" value="Restrct_endonuc-II-like"/>
</dbReference>
<dbReference type="NCBIfam" id="TIGR02248">
    <property type="entry name" value="mutH_TIGR"/>
    <property type="match status" value="1"/>
</dbReference>
<dbReference type="NCBIfam" id="NF003458">
    <property type="entry name" value="PRK05070.1"/>
    <property type="match status" value="1"/>
</dbReference>
<dbReference type="Pfam" id="PF02976">
    <property type="entry name" value="MutH"/>
    <property type="match status" value="1"/>
</dbReference>
<dbReference type="SMART" id="SM00927">
    <property type="entry name" value="MutH"/>
    <property type="match status" value="1"/>
</dbReference>
<dbReference type="SUPFAM" id="SSF52980">
    <property type="entry name" value="Restriction endonuclease-like"/>
    <property type="match status" value="1"/>
</dbReference>
<feature type="chain" id="PRO_0000198677" description="DNA mismatch repair protein MutH">
    <location>
        <begin position="1"/>
        <end position="226"/>
    </location>
</feature>
<protein>
    <recommendedName>
        <fullName evidence="1">DNA mismatch repair protein MutH</fullName>
    </recommendedName>
    <alternativeName>
        <fullName evidence="1">Methyl-directed mismatch repair protein</fullName>
    </alternativeName>
</protein>
<sequence>MKPEPQSEAELMERAHDIAGLSFAELADEAGMTVPENLKRDKGWVGQLLEWHLGAPAGSKPQQDFSKLGIELKSIPIGYNGRPLETTFVCVAPLTGVQGLTWETSHVRNKLSRVLWVPVEGEREIPLAERRVGTPLIWSPDKEEEQILRNDWEELMEMIVFGKFDQISARHGEALHLRPKAANAKALTEAYSSNGKPMKTLPRGFYLRTQFTEQILLKHYINVQSE</sequence>
<reference key="1">
    <citation type="journal article" date="2003" name="Lancet">
        <title>Genome sequence of Vibrio parahaemolyticus: a pathogenic mechanism distinct from that of V. cholerae.</title>
        <authorList>
            <person name="Makino K."/>
            <person name="Oshima K."/>
            <person name="Kurokawa K."/>
            <person name="Yokoyama K."/>
            <person name="Uda T."/>
            <person name="Tagomori K."/>
            <person name="Iijima Y."/>
            <person name="Najima M."/>
            <person name="Nakano M."/>
            <person name="Yamashita A."/>
            <person name="Kubota Y."/>
            <person name="Kimura S."/>
            <person name="Yasunaga T."/>
            <person name="Honda T."/>
            <person name="Shinagawa H."/>
            <person name="Hattori M."/>
            <person name="Iida T."/>
        </authorList>
    </citation>
    <scope>NUCLEOTIDE SEQUENCE [LARGE SCALE GENOMIC DNA]</scope>
    <source>
        <strain>RIMD 2210633</strain>
    </source>
</reference>
<keyword id="KW-0963">Cytoplasm</keyword>
<keyword id="KW-0227">DNA damage</keyword>
<keyword id="KW-0234">DNA repair</keyword>
<keyword id="KW-0255">Endonuclease</keyword>
<keyword id="KW-0378">Hydrolase</keyword>
<keyword id="KW-0540">Nuclease</keyword>
<organism>
    <name type="scientific">Vibrio parahaemolyticus serotype O3:K6 (strain RIMD 2210633)</name>
    <dbReference type="NCBI Taxonomy" id="223926"/>
    <lineage>
        <taxon>Bacteria</taxon>
        <taxon>Pseudomonadati</taxon>
        <taxon>Pseudomonadota</taxon>
        <taxon>Gammaproteobacteria</taxon>
        <taxon>Vibrionales</taxon>
        <taxon>Vibrionaceae</taxon>
        <taxon>Vibrio</taxon>
    </lineage>
</organism>
<gene>
    <name evidence="1" type="primary">mutH</name>
    <name type="ordered locus">VP0518</name>
</gene>
<evidence type="ECO:0000255" key="1">
    <source>
        <dbReference type="HAMAP-Rule" id="MF_00759"/>
    </source>
</evidence>
<comment type="function">
    <text evidence="1">Sequence-specific endonuclease that cleaves unmethylated GATC sequences. It is involved in DNA mismatch repair.</text>
</comment>
<comment type="subcellular location">
    <subcellularLocation>
        <location evidence="1">Cytoplasm</location>
    </subcellularLocation>
</comment>
<comment type="similarity">
    <text evidence="1">Belongs to the MutH family.</text>
</comment>
<proteinExistence type="inferred from homology"/>